<dbReference type="EC" id="7.1.1.-" evidence="1"/>
<dbReference type="EMBL" id="AP006714">
    <property type="protein sequence ID" value="BAD27296.1"/>
    <property type="molecule type" value="Genomic_DNA"/>
</dbReference>
<dbReference type="RefSeq" id="YP_009389574.1">
    <property type="nucleotide sequence ID" value="NC_035224.1"/>
</dbReference>
<dbReference type="SMR" id="Q6ENW0"/>
<dbReference type="GeneID" id="33347870"/>
<dbReference type="GO" id="GO:0009535">
    <property type="term" value="C:chloroplast thylakoid membrane"/>
    <property type="evidence" value="ECO:0007669"/>
    <property type="project" value="UniProtKB-SubCell"/>
</dbReference>
<dbReference type="GO" id="GO:0008137">
    <property type="term" value="F:NADH dehydrogenase (ubiquinone) activity"/>
    <property type="evidence" value="ECO:0007669"/>
    <property type="project" value="InterPro"/>
</dbReference>
<dbReference type="GO" id="GO:0048038">
    <property type="term" value="F:quinone binding"/>
    <property type="evidence" value="ECO:0007669"/>
    <property type="project" value="UniProtKB-KW"/>
</dbReference>
<dbReference type="GO" id="GO:0019684">
    <property type="term" value="P:photosynthesis, light reaction"/>
    <property type="evidence" value="ECO:0007669"/>
    <property type="project" value="UniProtKB-UniRule"/>
</dbReference>
<dbReference type="Gene3D" id="3.30.460.80">
    <property type="entry name" value="NADH:ubiquinone oxidoreductase, 30kDa subunit"/>
    <property type="match status" value="1"/>
</dbReference>
<dbReference type="HAMAP" id="MF_01357">
    <property type="entry name" value="NDH1_NuoC"/>
    <property type="match status" value="1"/>
</dbReference>
<dbReference type="InterPro" id="IPR010218">
    <property type="entry name" value="NADH_DH_suC"/>
</dbReference>
<dbReference type="InterPro" id="IPR037232">
    <property type="entry name" value="NADH_quin_OxRdtase_su_C/D-like"/>
</dbReference>
<dbReference type="InterPro" id="IPR001268">
    <property type="entry name" value="NADH_UbQ_OxRdtase_30kDa_su"/>
</dbReference>
<dbReference type="InterPro" id="IPR020396">
    <property type="entry name" value="NADH_UbQ_OxRdtase_CS"/>
</dbReference>
<dbReference type="NCBIfam" id="NF009141">
    <property type="entry name" value="PRK12494.1"/>
    <property type="match status" value="1"/>
</dbReference>
<dbReference type="PANTHER" id="PTHR10884:SF14">
    <property type="entry name" value="NADH DEHYDROGENASE [UBIQUINONE] IRON-SULFUR PROTEIN 3, MITOCHONDRIAL"/>
    <property type="match status" value="1"/>
</dbReference>
<dbReference type="PANTHER" id="PTHR10884">
    <property type="entry name" value="NADH DEHYDROGENASE UBIQUINONE IRON-SULFUR PROTEIN 3"/>
    <property type="match status" value="1"/>
</dbReference>
<dbReference type="Pfam" id="PF00329">
    <property type="entry name" value="Complex1_30kDa"/>
    <property type="match status" value="1"/>
</dbReference>
<dbReference type="SUPFAM" id="SSF143243">
    <property type="entry name" value="Nqo5-like"/>
    <property type="match status" value="1"/>
</dbReference>
<dbReference type="PROSITE" id="PS00542">
    <property type="entry name" value="COMPLEX1_30K"/>
    <property type="match status" value="1"/>
</dbReference>
<protein>
    <recommendedName>
        <fullName evidence="1">NAD(P)H-quinone oxidoreductase subunit J, chloroplastic</fullName>
        <ecNumber evidence="1">7.1.1.-</ecNumber>
    </recommendedName>
    <alternativeName>
        <fullName>NAD(P)H dehydrogenase subunit J</fullName>
    </alternativeName>
    <alternativeName>
        <fullName evidence="1">NADH-plastoquinone oxidoreductase subunit J</fullName>
    </alternativeName>
</protein>
<reference key="1">
    <citation type="journal article" date="2004" name="DNA Res.">
        <title>Complete nucleotide sequence of the sugarcane (Saccharum officinarum) chloroplast genome: a comparative analysis of four monocot chloroplast genomes.</title>
        <authorList>
            <person name="Asano T."/>
            <person name="Tsudzuki T."/>
            <person name="Takahashi S."/>
            <person name="Shimada H."/>
            <person name="Kadowaki K."/>
        </authorList>
    </citation>
    <scope>NUCLEOTIDE SEQUENCE [LARGE SCALE GENOMIC DNA]</scope>
</reference>
<accession>Q6ENW0</accession>
<comment type="function">
    <text evidence="1">NDH shuttles electrons from NAD(P)H:plastoquinone, via FMN and iron-sulfur (Fe-S) centers, to quinones in the photosynthetic chain and possibly in a chloroplast respiratory chain. The immediate electron acceptor for the enzyme in this species is believed to be plastoquinone. Couples the redox reaction to proton translocation, and thus conserves the redox energy in a proton gradient.</text>
</comment>
<comment type="catalytic activity">
    <reaction evidence="1">
        <text>a plastoquinone + NADH + (n+1) H(+)(in) = a plastoquinol + NAD(+) + n H(+)(out)</text>
        <dbReference type="Rhea" id="RHEA:42608"/>
        <dbReference type="Rhea" id="RHEA-COMP:9561"/>
        <dbReference type="Rhea" id="RHEA-COMP:9562"/>
        <dbReference type="ChEBI" id="CHEBI:15378"/>
        <dbReference type="ChEBI" id="CHEBI:17757"/>
        <dbReference type="ChEBI" id="CHEBI:57540"/>
        <dbReference type="ChEBI" id="CHEBI:57945"/>
        <dbReference type="ChEBI" id="CHEBI:62192"/>
    </reaction>
</comment>
<comment type="catalytic activity">
    <reaction evidence="1">
        <text>a plastoquinone + NADPH + (n+1) H(+)(in) = a plastoquinol + NADP(+) + n H(+)(out)</text>
        <dbReference type="Rhea" id="RHEA:42612"/>
        <dbReference type="Rhea" id="RHEA-COMP:9561"/>
        <dbReference type="Rhea" id="RHEA-COMP:9562"/>
        <dbReference type="ChEBI" id="CHEBI:15378"/>
        <dbReference type="ChEBI" id="CHEBI:17757"/>
        <dbReference type="ChEBI" id="CHEBI:57783"/>
        <dbReference type="ChEBI" id="CHEBI:58349"/>
        <dbReference type="ChEBI" id="CHEBI:62192"/>
    </reaction>
</comment>
<comment type="subunit">
    <text evidence="1">NDH is composed of at least 16 different subunits, 5 of which are encoded in the nucleus.</text>
</comment>
<comment type="subcellular location">
    <subcellularLocation>
        <location evidence="1">Plastid</location>
        <location evidence="1">Chloroplast thylakoid membrane</location>
        <topology evidence="1">Peripheral membrane protein</topology>
        <orientation evidence="1">Stromal side</orientation>
    </subcellularLocation>
</comment>
<comment type="similarity">
    <text evidence="1">Belongs to the complex I 30 kDa subunit family.</text>
</comment>
<proteinExistence type="inferred from homology"/>
<name>NDHJ_SACOF</name>
<evidence type="ECO:0000255" key="1">
    <source>
        <dbReference type="HAMAP-Rule" id="MF_01357"/>
    </source>
</evidence>
<organism>
    <name type="scientific">Saccharum officinarum</name>
    <name type="common">Sugarcane</name>
    <dbReference type="NCBI Taxonomy" id="4547"/>
    <lineage>
        <taxon>Eukaryota</taxon>
        <taxon>Viridiplantae</taxon>
        <taxon>Streptophyta</taxon>
        <taxon>Embryophyta</taxon>
        <taxon>Tracheophyta</taxon>
        <taxon>Spermatophyta</taxon>
        <taxon>Magnoliopsida</taxon>
        <taxon>Liliopsida</taxon>
        <taxon>Poales</taxon>
        <taxon>Poaceae</taxon>
        <taxon>PACMAD clade</taxon>
        <taxon>Panicoideae</taxon>
        <taxon>Andropogonodae</taxon>
        <taxon>Andropogoneae</taxon>
        <taxon>Saccharinae</taxon>
        <taxon>Saccharum</taxon>
        <taxon>Saccharum officinarum species complex</taxon>
    </lineage>
</organism>
<gene>
    <name evidence="1" type="primary">ndhJ</name>
</gene>
<geneLocation type="chloroplast"/>
<sequence>MQQGWLSNWLVKHDVVHRSLGFDHRGVETLQIKAGDWDSIAVILYVYGYNYLRSQCAYDVAPGGSLASVYHLTRIQYGIDNPEEVCIKVFAQKDNPRIPSVFWVWRSADFQERESYDMVGISYDNHPRLKRILMPESWIGWPLRKDYITPNFYEIQDAH</sequence>
<keyword id="KW-0150">Chloroplast</keyword>
<keyword id="KW-0472">Membrane</keyword>
<keyword id="KW-0520">NAD</keyword>
<keyword id="KW-0521">NADP</keyword>
<keyword id="KW-0934">Plastid</keyword>
<keyword id="KW-0618">Plastoquinone</keyword>
<keyword id="KW-0874">Quinone</keyword>
<keyword id="KW-0793">Thylakoid</keyword>
<keyword id="KW-1278">Translocase</keyword>
<keyword id="KW-0813">Transport</keyword>
<feature type="chain" id="PRO_0000226915" description="NAD(P)H-quinone oxidoreductase subunit J, chloroplastic">
    <location>
        <begin position="1"/>
        <end position="159"/>
    </location>
</feature>